<keyword id="KW-0934">Plastid</keyword>
<keyword id="KW-0687">Ribonucleoprotein</keyword>
<keyword id="KW-0689">Ribosomal protein</keyword>
<gene>
    <name evidence="1" type="primary">rpl33</name>
</gene>
<accession>B0YPP9</accession>
<feature type="chain" id="PRO_0000356782" description="Large ribosomal subunit protein bL33c">
    <location>
        <begin position="1"/>
        <end position="65"/>
    </location>
</feature>
<organism>
    <name type="scientific">Aneura mirabilis</name>
    <name type="common">Parasitic liverwort</name>
    <name type="synonym">Cryptothallus mirabilis</name>
    <dbReference type="NCBI Taxonomy" id="280810"/>
    <lineage>
        <taxon>Eukaryota</taxon>
        <taxon>Viridiplantae</taxon>
        <taxon>Streptophyta</taxon>
        <taxon>Embryophyta</taxon>
        <taxon>Marchantiophyta</taxon>
        <taxon>Jungermanniopsida</taxon>
        <taxon>Metzgeriidae</taxon>
        <taxon>Metzgeriales</taxon>
        <taxon>Aneuraceae</taxon>
        <taxon>Aneura</taxon>
    </lineage>
</organism>
<geneLocation type="non-photosynthetic plastid"/>
<comment type="subcellular location">
    <subcellularLocation>
        <location>Plastid</location>
    </subcellularLocation>
</comment>
<comment type="similarity">
    <text evidence="1">Belongs to the bacterial ribosomal protein bL33 family.</text>
</comment>
<reference key="1">
    <citation type="journal article" date="2008" name="Mol. Biol. Evol.">
        <title>Functional gene losses occur with minimal size reduction in the plastid genome of the parasitic liverwort Aneura mirabilis.</title>
        <authorList>
            <person name="Wickett N.J."/>
            <person name="Zhang Y."/>
            <person name="Hansen S.K."/>
            <person name="Roper J.M."/>
            <person name="Kuehl J.V."/>
            <person name="Plock S.A."/>
            <person name="Wolf P.G."/>
            <person name="dePamphilis C.W."/>
            <person name="Boore J.L."/>
            <person name="Goffinet B."/>
        </authorList>
    </citation>
    <scope>NUCLEOTIDE SEQUENCE [LARGE SCALE GENOMIC DNA]</scope>
</reference>
<sequence>MARGKEIRVTINPECINCFRDSGRRYRGISRYTTQKNRRNTPIRLELRKFCRYCGEHTIHKEMKK</sequence>
<evidence type="ECO:0000255" key="1">
    <source>
        <dbReference type="HAMAP-Rule" id="MF_00294"/>
    </source>
</evidence>
<evidence type="ECO:0000305" key="2"/>
<dbReference type="EMBL" id="EU043314">
    <property type="protein sequence ID" value="ABS54496.1"/>
    <property type="molecule type" value="Genomic_DNA"/>
</dbReference>
<dbReference type="RefSeq" id="YP_001687235.1">
    <property type="nucleotide sequence ID" value="NC_010359.1"/>
</dbReference>
<dbReference type="GeneID" id="5952208"/>
<dbReference type="GO" id="GO:0009536">
    <property type="term" value="C:plastid"/>
    <property type="evidence" value="ECO:0007669"/>
    <property type="project" value="UniProtKB-SubCell"/>
</dbReference>
<dbReference type="GO" id="GO:1990904">
    <property type="term" value="C:ribonucleoprotein complex"/>
    <property type="evidence" value="ECO:0007669"/>
    <property type="project" value="UniProtKB-KW"/>
</dbReference>
<dbReference type="GO" id="GO:0005840">
    <property type="term" value="C:ribosome"/>
    <property type="evidence" value="ECO:0007669"/>
    <property type="project" value="UniProtKB-KW"/>
</dbReference>
<dbReference type="GO" id="GO:0003735">
    <property type="term" value="F:structural constituent of ribosome"/>
    <property type="evidence" value="ECO:0007669"/>
    <property type="project" value="InterPro"/>
</dbReference>
<dbReference type="GO" id="GO:0006412">
    <property type="term" value="P:translation"/>
    <property type="evidence" value="ECO:0007669"/>
    <property type="project" value="InterPro"/>
</dbReference>
<dbReference type="Gene3D" id="2.20.28.120">
    <property type="entry name" value="Ribosomal protein L33"/>
    <property type="match status" value="1"/>
</dbReference>
<dbReference type="HAMAP" id="MF_00294">
    <property type="entry name" value="Ribosomal_bL33"/>
    <property type="match status" value="1"/>
</dbReference>
<dbReference type="InterPro" id="IPR001705">
    <property type="entry name" value="Ribosomal_bL33"/>
</dbReference>
<dbReference type="InterPro" id="IPR018264">
    <property type="entry name" value="Ribosomal_bL33_CS"/>
</dbReference>
<dbReference type="InterPro" id="IPR038584">
    <property type="entry name" value="Ribosomal_bL33_sf"/>
</dbReference>
<dbReference type="InterPro" id="IPR011332">
    <property type="entry name" value="Ribosomal_zn-bd"/>
</dbReference>
<dbReference type="NCBIfam" id="NF001764">
    <property type="entry name" value="PRK00504.1"/>
    <property type="match status" value="1"/>
</dbReference>
<dbReference type="NCBIfam" id="NF001860">
    <property type="entry name" value="PRK00595.1"/>
    <property type="match status" value="1"/>
</dbReference>
<dbReference type="NCBIfam" id="TIGR01023">
    <property type="entry name" value="rpmG_bact"/>
    <property type="match status" value="1"/>
</dbReference>
<dbReference type="PANTHER" id="PTHR43168">
    <property type="entry name" value="50S RIBOSOMAL PROTEIN L33, CHLOROPLASTIC"/>
    <property type="match status" value="1"/>
</dbReference>
<dbReference type="PANTHER" id="PTHR43168:SF2">
    <property type="entry name" value="LARGE RIBOSOMAL SUBUNIT PROTEIN BL33C"/>
    <property type="match status" value="1"/>
</dbReference>
<dbReference type="Pfam" id="PF00471">
    <property type="entry name" value="Ribosomal_L33"/>
    <property type="match status" value="1"/>
</dbReference>
<dbReference type="SUPFAM" id="SSF57829">
    <property type="entry name" value="Zn-binding ribosomal proteins"/>
    <property type="match status" value="1"/>
</dbReference>
<dbReference type="PROSITE" id="PS00582">
    <property type="entry name" value="RIBOSOMAL_L33"/>
    <property type="match status" value="1"/>
</dbReference>
<proteinExistence type="inferred from homology"/>
<protein>
    <recommendedName>
        <fullName evidence="1">Large ribosomal subunit protein bL33c</fullName>
    </recommendedName>
    <alternativeName>
        <fullName evidence="2">50S ribosomal protein L33, plastid</fullName>
    </alternativeName>
</protein>
<name>RK33_ANEMR</name>